<name>RR7_GUNCH</name>
<organism>
    <name type="scientific">Gunnera chilensis</name>
    <name type="common">Chilean rhubarb</name>
    <dbReference type="NCBI Taxonomy" id="130722"/>
    <lineage>
        <taxon>Eukaryota</taxon>
        <taxon>Viridiplantae</taxon>
        <taxon>Streptophyta</taxon>
        <taxon>Embryophyta</taxon>
        <taxon>Tracheophyta</taxon>
        <taxon>Spermatophyta</taxon>
        <taxon>Magnoliopsida</taxon>
        <taxon>eudicotyledons</taxon>
        <taxon>Gunneridae</taxon>
        <taxon>Gunnerales</taxon>
        <taxon>Gunneraceae</taxon>
        <taxon>Gunnera</taxon>
    </lineage>
</organism>
<geneLocation type="chloroplast"/>
<sequence>MSRRGTAEEKTAKSDPIYRNRLVNMLVNRILKHGKKSLAYQIIYRAMKKIQQKTETNPLSVLRQAIRGVTPDIAVKARRVGGSTHQVPIEIGSTQGKALAIRWLLGASRKRPGRNMAFKLSSELVDAAKGSGDAIRKKEETHRMAEANXAFAHFR</sequence>
<protein>
    <recommendedName>
        <fullName evidence="2">Small ribosomal subunit protein uS7c</fullName>
    </recommendedName>
    <alternativeName>
        <fullName>30S ribosomal protein S7, chloroplastic</fullName>
    </alternativeName>
</protein>
<proteinExistence type="inferred from homology"/>
<keyword id="KW-0150">Chloroplast</keyword>
<keyword id="KW-0934">Plastid</keyword>
<keyword id="KW-0687">Ribonucleoprotein</keyword>
<keyword id="KW-0689">Ribosomal protein</keyword>
<keyword id="KW-0694">RNA-binding</keyword>
<keyword id="KW-0699">rRNA-binding</keyword>
<accession>Q6KGY2</accession>
<reference key="1">
    <citation type="submission" date="2000-02" db="EMBL/GenBank/DDBJ databases">
        <title>Long branches in the seed plants and the root of the angiosperms.</title>
        <authorList>
            <person name="Graham S.W."/>
            <person name="Reeves P.A."/>
            <person name="Burns A."/>
            <person name="Olmstead R.G."/>
        </authorList>
    </citation>
    <scope>NUCLEOTIDE SEQUENCE [GENOMIC DNA]</scope>
</reference>
<evidence type="ECO:0000250" key="1"/>
<evidence type="ECO:0000305" key="2"/>
<dbReference type="EMBL" id="AF238068">
    <property type="protein sequence ID" value="AAQ14209.1"/>
    <property type="molecule type" value="Genomic_DNA"/>
</dbReference>
<dbReference type="GO" id="GO:0009507">
    <property type="term" value="C:chloroplast"/>
    <property type="evidence" value="ECO:0007669"/>
    <property type="project" value="UniProtKB-SubCell"/>
</dbReference>
<dbReference type="GO" id="GO:0015935">
    <property type="term" value="C:small ribosomal subunit"/>
    <property type="evidence" value="ECO:0007669"/>
    <property type="project" value="InterPro"/>
</dbReference>
<dbReference type="GO" id="GO:0019843">
    <property type="term" value="F:rRNA binding"/>
    <property type="evidence" value="ECO:0007669"/>
    <property type="project" value="UniProtKB-UniRule"/>
</dbReference>
<dbReference type="GO" id="GO:0003735">
    <property type="term" value="F:structural constituent of ribosome"/>
    <property type="evidence" value="ECO:0007669"/>
    <property type="project" value="InterPro"/>
</dbReference>
<dbReference type="GO" id="GO:0006412">
    <property type="term" value="P:translation"/>
    <property type="evidence" value="ECO:0007669"/>
    <property type="project" value="UniProtKB-UniRule"/>
</dbReference>
<dbReference type="CDD" id="cd14871">
    <property type="entry name" value="uS7_Chloroplast"/>
    <property type="match status" value="1"/>
</dbReference>
<dbReference type="FunFam" id="1.10.455.10:FF:000001">
    <property type="entry name" value="30S ribosomal protein S7"/>
    <property type="match status" value="1"/>
</dbReference>
<dbReference type="Gene3D" id="1.10.455.10">
    <property type="entry name" value="Ribosomal protein S7 domain"/>
    <property type="match status" value="1"/>
</dbReference>
<dbReference type="HAMAP" id="MF_00480_B">
    <property type="entry name" value="Ribosomal_uS7_B"/>
    <property type="match status" value="1"/>
</dbReference>
<dbReference type="InterPro" id="IPR000235">
    <property type="entry name" value="Ribosomal_uS7"/>
</dbReference>
<dbReference type="InterPro" id="IPR005717">
    <property type="entry name" value="Ribosomal_uS7_bac/org-type"/>
</dbReference>
<dbReference type="InterPro" id="IPR020606">
    <property type="entry name" value="Ribosomal_uS7_CS"/>
</dbReference>
<dbReference type="InterPro" id="IPR023798">
    <property type="entry name" value="Ribosomal_uS7_dom"/>
</dbReference>
<dbReference type="InterPro" id="IPR036823">
    <property type="entry name" value="Ribosomal_uS7_dom_sf"/>
</dbReference>
<dbReference type="NCBIfam" id="TIGR01029">
    <property type="entry name" value="rpsG_bact"/>
    <property type="match status" value="1"/>
</dbReference>
<dbReference type="PANTHER" id="PTHR11205">
    <property type="entry name" value="RIBOSOMAL PROTEIN S7"/>
    <property type="match status" value="1"/>
</dbReference>
<dbReference type="Pfam" id="PF00177">
    <property type="entry name" value="Ribosomal_S7"/>
    <property type="match status" value="1"/>
</dbReference>
<dbReference type="PIRSF" id="PIRSF002122">
    <property type="entry name" value="RPS7p_RPS7a_RPS5e_RPS7o"/>
    <property type="match status" value="1"/>
</dbReference>
<dbReference type="SUPFAM" id="SSF47973">
    <property type="entry name" value="Ribosomal protein S7"/>
    <property type="match status" value="1"/>
</dbReference>
<dbReference type="PROSITE" id="PS00052">
    <property type="entry name" value="RIBOSOMAL_S7"/>
    <property type="match status" value="1"/>
</dbReference>
<comment type="function">
    <text evidence="1">One of the primary rRNA binding proteins, it binds directly to 16S rRNA where it nucleates assembly of the head domain of the 30S subunit.</text>
</comment>
<comment type="subunit">
    <text>Part of the 30S ribosomal subunit.</text>
</comment>
<comment type="subcellular location">
    <subcellularLocation>
        <location>Plastid</location>
        <location>Chloroplast</location>
    </subcellularLocation>
</comment>
<comment type="similarity">
    <text evidence="2">Belongs to the universal ribosomal protein uS7 family.</text>
</comment>
<feature type="chain" id="PRO_0000124459" description="Small ribosomal subunit protein uS7c">
    <location>
        <begin position="1"/>
        <end position="155"/>
    </location>
</feature>
<gene>
    <name type="primary">rps7</name>
</gene>